<gene>
    <name evidence="1" type="primary">pafA</name>
    <name type="ordered locus">Acel_1191</name>
</gene>
<keyword id="KW-0067">ATP-binding</keyword>
<keyword id="KW-0436">Ligase</keyword>
<keyword id="KW-0460">Magnesium</keyword>
<keyword id="KW-0479">Metal-binding</keyword>
<keyword id="KW-0547">Nucleotide-binding</keyword>
<keyword id="KW-1185">Reference proteome</keyword>
<keyword id="KW-0833">Ubl conjugation pathway</keyword>
<protein>
    <recommendedName>
        <fullName evidence="1">Pup--protein ligase</fullName>
        <ecNumber evidence="1">6.3.1.19</ecNumber>
    </recommendedName>
    <alternativeName>
        <fullName evidence="1">Proteasome accessory factor A</fullName>
    </alternativeName>
    <alternativeName>
        <fullName evidence="1">Pup-conjugating enzyme</fullName>
    </alternativeName>
</protein>
<evidence type="ECO:0000255" key="1">
    <source>
        <dbReference type="HAMAP-Rule" id="MF_02111"/>
    </source>
</evidence>
<proteinExistence type="inferred from homology"/>
<name>PAFA_ACIC1</name>
<feature type="chain" id="PRO_0000395890" description="Pup--protein ligase">
    <location>
        <begin position="1"/>
        <end position="452"/>
    </location>
</feature>
<feature type="active site" description="Proton acceptor" evidence="1">
    <location>
        <position position="57"/>
    </location>
</feature>
<feature type="binding site" evidence="1">
    <location>
        <position position="9"/>
    </location>
    <ligand>
        <name>Mg(2+)</name>
        <dbReference type="ChEBI" id="CHEBI:18420"/>
    </ligand>
</feature>
<feature type="binding site" evidence="1">
    <location>
        <position position="53"/>
    </location>
    <ligand>
        <name>ATP</name>
        <dbReference type="ChEBI" id="CHEBI:30616"/>
    </ligand>
</feature>
<feature type="binding site" evidence="1">
    <location>
        <position position="55"/>
    </location>
    <ligand>
        <name>Mg(2+)</name>
        <dbReference type="ChEBI" id="CHEBI:18420"/>
    </ligand>
</feature>
<feature type="binding site" evidence="1">
    <location>
        <position position="63"/>
    </location>
    <ligand>
        <name>Mg(2+)</name>
        <dbReference type="ChEBI" id="CHEBI:18420"/>
    </ligand>
</feature>
<feature type="binding site" evidence="1">
    <location>
        <position position="66"/>
    </location>
    <ligand>
        <name>ATP</name>
        <dbReference type="ChEBI" id="CHEBI:30616"/>
    </ligand>
</feature>
<feature type="binding site" evidence="1">
    <location>
        <position position="419"/>
    </location>
    <ligand>
        <name>ATP</name>
        <dbReference type="ChEBI" id="CHEBI:30616"/>
    </ligand>
</feature>
<sequence>MDRRIFGLENEYGVTCTFHGQRRLSPDEVARYLFRRVVSWGRSSNVFLRNGARLYLDVGSHPEYATPECDNLVDLVVHDKAGERTLEGLLVDAEHRLREEGITGDIYLFKNNTDSAGNSYGCHENYLVTRQGEFSRLADVLIPFLVTRQLICGAGKVLATPRGAVYCLSQRAEHIWEGVSSATTRSRPIINTRDEPHADAERFRRLHVIVGDSNMAEPSTLLKVGSTDIVLRMIEAGVVLRDLSLENPIRAIREVSHDPTGRRRIRMANGREASALEIQEEYLSKAQEFLERRGTDAVTKRVLDLWERTLRAVRTGDLSLVDREIDWVIKYRLIEAYRARHDLPLSSPRVAQIDLAYHDVKRTRGLYYLLERKGAVERVAHDVQIFEAKSTPPQTTRARLRGEFIRHAQEKRRDFTVDWVHLKLNDQAQRTVLCKDPFRSVDERVEKLIASM</sequence>
<organism>
    <name type="scientific">Acidothermus cellulolyticus (strain ATCC 43068 / DSM 8971 / 11B)</name>
    <dbReference type="NCBI Taxonomy" id="351607"/>
    <lineage>
        <taxon>Bacteria</taxon>
        <taxon>Bacillati</taxon>
        <taxon>Actinomycetota</taxon>
        <taxon>Actinomycetes</taxon>
        <taxon>Acidothermales</taxon>
        <taxon>Acidothermaceae</taxon>
        <taxon>Acidothermus</taxon>
    </lineage>
</organism>
<accession>A0LU53</accession>
<reference key="1">
    <citation type="journal article" date="2009" name="Genome Res.">
        <title>Complete genome of the cellulolytic thermophile Acidothermus cellulolyticus 11B provides insights into its ecophysiological and evolutionary adaptations.</title>
        <authorList>
            <person name="Barabote R.D."/>
            <person name="Xie G."/>
            <person name="Leu D.H."/>
            <person name="Normand P."/>
            <person name="Necsulea A."/>
            <person name="Daubin V."/>
            <person name="Medigue C."/>
            <person name="Adney W.S."/>
            <person name="Xu X.C."/>
            <person name="Lapidus A."/>
            <person name="Parales R.E."/>
            <person name="Detter C."/>
            <person name="Pujic P."/>
            <person name="Bruce D."/>
            <person name="Lavire C."/>
            <person name="Challacombe J.F."/>
            <person name="Brettin T.S."/>
            <person name="Berry A.M."/>
        </authorList>
    </citation>
    <scope>NUCLEOTIDE SEQUENCE [LARGE SCALE GENOMIC DNA]</scope>
    <source>
        <strain>ATCC 43068 / DSM 8971 / 11B</strain>
    </source>
</reference>
<dbReference type="EC" id="6.3.1.19" evidence="1"/>
<dbReference type="EMBL" id="CP000481">
    <property type="protein sequence ID" value="ABK52963.1"/>
    <property type="molecule type" value="Genomic_DNA"/>
</dbReference>
<dbReference type="RefSeq" id="WP_011720026.1">
    <property type="nucleotide sequence ID" value="NC_008578.1"/>
</dbReference>
<dbReference type="SMR" id="A0LU53"/>
<dbReference type="STRING" id="351607.Acel_1191"/>
<dbReference type="MEROPS" id="U72.001"/>
<dbReference type="KEGG" id="ace:Acel_1191"/>
<dbReference type="eggNOG" id="COG0638">
    <property type="taxonomic scope" value="Bacteria"/>
</dbReference>
<dbReference type="HOGENOM" id="CLU_040524_0_1_11"/>
<dbReference type="InParanoid" id="A0LU53"/>
<dbReference type="OrthoDB" id="9760627at2"/>
<dbReference type="BRENDA" id="6.3.1.19">
    <property type="organism ID" value="9545"/>
</dbReference>
<dbReference type="UniPathway" id="UPA00997"/>
<dbReference type="UniPathway" id="UPA00998"/>
<dbReference type="Proteomes" id="UP000008221">
    <property type="component" value="Chromosome"/>
</dbReference>
<dbReference type="GO" id="GO:0005524">
    <property type="term" value="F:ATP binding"/>
    <property type="evidence" value="ECO:0007669"/>
    <property type="project" value="UniProtKB-UniRule"/>
</dbReference>
<dbReference type="GO" id="GO:0016879">
    <property type="term" value="F:ligase activity, forming carbon-nitrogen bonds"/>
    <property type="evidence" value="ECO:0007669"/>
    <property type="project" value="InterPro"/>
</dbReference>
<dbReference type="GO" id="GO:0000287">
    <property type="term" value="F:magnesium ion binding"/>
    <property type="evidence" value="ECO:0007669"/>
    <property type="project" value="UniProtKB-UniRule"/>
</dbReference>
<dbReference type="GO" id="GO:0019787">
    <property type="term" value="F:ubiquitin-like protein transferase activity"/>
    <property type="evidence" value="ECO:0007669"/>
    <property type="project" value="UniProtKB-UniRule"/>
</dbReference>
<dbReference type="GO" id="GO:0019941">
    <property type="term" value="P:modification-dependent protein catabolic process"/>
    <property type="evidence" value="ECO:0007669"/>
    <property type="project" value="UniProtKB-UniRule"/>
</dbReference>
<dbReference type="GO" id="GO:0010498">
    <property type="term" value="P:proteasomal protein catabolic process"/>
    <property type="evidence" value="ECO:0007669"/>
    <property type="project" value="UniProtKB-UniRule"/>
</dbReference>
<dbReference type="GO" id="GO:0070490">
    <property type="term" value="P:protein pupylation"/>
    <property type="evidence" value="ECO:0007669"/>
    <property type="project" value="UniProtKB-UniRule"/>
</dbReference>
<dbReference type="HAMAP" id="MF_02111">
    <property type="entry name" value="Pup_ligase"/>
    <property type="match status" value="1"/>
</dbReference>
<dbReference type="InterPro" id="IPR022279">
    <property type="entry name" value="Pup_ligase"/>
</dbReference>
<dbReference type="InterPro" id="IPR004347">
    <property type="entry name" value="Pup_ligase/deamidase"/>
</dbReference>
<dbReference type="NCBIfam" id="TIGR03686">
    <property type="entry name" value="pupylate_PafA"/>
    <property type="match status" value="1"/>
</dbReference>
<dbReference type="PANTHER" id="PTHR42307">
    <property type="entry name" value="PUP DEAMIDASE/DEPUPYLASE"/>
    <property type="match status" value="1"/>
</dbReference>
<dbReference type="PANTHER" id="PTHR42307:SF3">
    <property type="entry name" value="PUP--PROTEIN LIGASE"/>
    <property type="match status" value="1"/>
</dbReference>
<dbReference type="Pfam" id="PF03136">
    <property type="entry name" value="Pup_ligase"/>
    <property type="match status" value="1"/>
</dbReference>
<dbReference type="PIRSF" id="PIRSF018077">
    <property type="entry name" value="UCP018077"/>
    <property type="match status" value="1"/>
</dbReference>
<comment type="function">
    <text evidence="1">Catalyzes the covalent attachment of the prokaryotic ubiquitin-like protein modifier Pup to the proteasomal substrate proteins, thereby targeting them for proteasomal degradation. This tagging system is termed pupylation. The ligation reaction involves the side-chain carboxylate of the C-terminal glutamate of Pup and the side-chain amino group of a substrate lysine.</text>
</comment>
<comment type="catalytic activity">
    <reaction evidence="1">
        <text>ATP + [prokaryotic ubiquitin-like protein]-L-glutamate + [protein]-L-lysine = ADP + phosphate + N(6)-([prokaryotic ubiquitin-like protein]-gamma-L-glutamyl)-[protein]-L-lysine.</text>
        <dbReference type="EC" id="6.3.1.19"/>
    </reaction>
</comment>
<comment type="pathway">
    <text evidence="1">Protein degradation; proteasomal Pup-dependent pathway.</text>
</comment>
<comment type="pathway">
    <text evidence="1">Protein modification; protein pupylation.</text>
</comment>
<comment type="miscellaneous">
    <text evidence="1">The reaction mechanism probably proceeds via the activation of Pup by phosphorylation of its C-terminal glutamate, which is then subject to nucleophilic attack by the substrate lysine, resulting in an isopeptide bond and the release of phosphate as a good leaving group.</text>
</comment>
<comment type="similarity">
    <text evidence="1">Belongs to the Pup ligase/Pup deamidase family. Pup-conjugating enzyme subfamily.</text>
</comment>